<sequence>MTQCDARLPQGGVKLADYTTWRVGGAAEWLAEPASLDETQAWIEWAAHQGMPCRVIGAGSNLLIHDDGLPGLSLCLRKLQGLQLDATTGTVEVLAGEPIPSLARRAARAGLHGLEWSIGIPGTAGGAAVMNAGAQGGCTAEWLESVRVVPLEGGNCFELQRHQLDFAYRHSRLQEDNLVVLSARFRLQPGHDPDELKRVTTANLSHRTTTQPYQQPSCGSVFRNPEPLKAGRLIEEQGLKGTRIGGAEISTVHANFIVNTGDAQAKDIAQLIHLVQDRIEAKHGIRLHTEVKRLGFASAA</sequence>
<reference key="1">
    <citation type="submission" date="2005-07" db="EMBL/GenBank/DDBJ databases">
        <title>Complete sequence of Synechococcus sp. CC9605.</title>
        <authorList>
            <consortium name="US DOE Joint Genome Institute"/>
            <person name="Copeland A."/>
            <person name="Lucas S."/>
            <person name="Lapidus A."/>
            <person name="Barry K."/>
            <person name="Detter J.C."/>
            <person name="Glavina T."/>
            <person name="Hammon N."/>
            <person name="Israni S."/>
            <person name="Pitluck S."/>
            <person name="Schmutz J."/>
            <person name="Martinez M."/>
            <person name="Larimer F."/>
            <person name="Land M."/>
            <person name="Kyrpides N."/>
            <person name="Ivanova N."/>
            <person name="Richardson P."/>
        </authorList>
    </citation>
    <scope>NUCLEOTIDE SEQUENCE [LARGE SCALE GENOMIC DNA]</scope>
    <source>
        <strain>CC9605</strain>
    </source>
</reference>
<feature type="chain" id="PRO_0000332511" description="UDP-N-acetylenolpyruvoylglucosamine reductase">
    <location>
        <begin position="1"/>
        <end position="300"/>
    </location>
</feature>
<feature type="domain" description="FAD-binding PCMH-type" evidence="1">
    <location>
        <begin position="22"/>
        <end position="190"/>
    </location>
</feature>
<feature type="active site" evidence="1">
    <location>
        <position position="169"/>
    </location>
</feature>
<feature type="active site" description="Proton donor" evidence="1">
    <location>
        <position position="220"/>
    </location>
</feature>
<feature type="active site" evidence="1">
    <location>
        <position position="290"/>
    </location>
</feature>
<name>MURB_SYNSC</name>
<proteinExistence type="inferred from homology"/>
<accession>Q3ANM5</accession>
<dbReference type="EC" id="1.3.1.98" evidence="1"/>
<dbReference type="EMBL" id="CP000110">
    <property type="protein sequence ID" value="ABB33807.1"/>
    <property type="molecule type" value="Genomic_DNA"/>
</dbReference>
<dbReference type="RefSeq" id="WP_011363069.1">
    <property type="nucleotide sequence ID" value="NC_007516.1"/>
</dbReference>
<dbReference type="SMR" id="Q3ANM5"/>
<dbReference type="STRING" id="110662.Syncc9605_0028"/>
<dbReference type="KEGG" id="syd:Syncc9605_0028"/>
<dbReference type="eggNOG" id="COG0812">
    <property type="taxonomic scope" value="Bacteria"/>
</dbReference>
<dbReference type="HOGENOM" id="CLU_035304_1_1_3"/>
<dbReference type="OrthoDB" id="9804753at2"/>
<dbReference type="UniPathway" id="UPA00219"/>
<dbReference type="GO" id="GO:0005829">
    <property type="term" value="C:cytosol"/>
    <property type="evidence" value="ECO:0007669"/>
    <property type="project" value="TreeGrafter"/>
</dbReference>
<dbReference type="GO" id="GO:0071949">
    <property type="term" value="F:FAD binding"/>
    <property type="evidence" value="ECO:0007669"/>
    <property type="project" value="InterPro"/>
</dbReference>
<dbReference type="GO" id="GO:0008762">
    <property type="term" value="F:UDP-N-acetylmuramate dehydrogenase activity"/>
    <property type="evidence" value="ECO:0007669"/>
    <property type="project" value="UniProtKB-UniRule"/>
</dbReference>
<dbReference type="GO" id="GO:0051301">
    <property type="term" value="P:cell division"/>
    <property type="evidence" value="ECO:0007669"/>
    <property type="project" value="UniProtKB-KW"/>
</dbReference>
<dbReference type="GO" id="GO:0071555">
    <property type="term" value="P:cell wall organization"/>
    <property type="evidence" value="ECO:0007669"/>
    <property type="project" value="UniProtKB-KW"/>
</dbReference>
<dbReference type="GO" id="GO:0009252">
    <property type="term" value="P:peptidoglycan biosynthetic process"/>
    <property type="evidence" value="ECO:0007669"/>
    <property type="project" value="UniProtKB-UniRule"/>
</dbReference>
<dbReference type="GO" id="GO:0008360">
    <property type="term" value="P:regulation of cell shape"/>
    <property type="evidence" value="ECO:0007669"/>
    <property type="project" value="UniProtKB-KW"/>
</dbReference>
<dbReference type="Gene3D" id="3.30.465.10">
    <property type="match status" value="1"/>
</dbReference>
<dbReference type="Gene3D" id="3.90.78.10">
    <property type="entry name" value="UDP-N-acetylenolpyruvoylglucosamine reductase, C-terminal domain"/>
    <property type="match status" value="1"/>
</dbReference>
<dbReference type="Gene3D" id="3.30.43.10">
    <property type="entry name" value="Uridine Diphospho-n-acetylenolpyruvylglucosamine Reductase, domain 2"/>
    <property type="match status" value="1"/>
</dbReference>
<dbReference type="HAMAP" id="MF_00037">
    <property type="entry name" value="MurB"/>
    <property type="match status" value="1"/>
</dbReference>
<dbReference type="InterPro" id="IPR016166">
    <property type="entry name" value="FAD-bd_PCMH"/>
</dbReference>
<dbReference type="InterPro" id="IPR036318">
    <property type="entry name" value="FAD-bd_PCMH-like_sf"/>
</dbReference>
<dbReference type="InterPro" id="IPR016167">
    <property type="entry name" value="FAD-bd_PCMH_sub1"/>
</dbReference>
<dbReference type="InterPro" id="IPR016169">
    <property type="entry name" value="FAD-bd_PCMH_sub2"/>
</dbReference>
<dbReference type="InterPro" id="IPR003170">
    <property type="entry name" value="MurB"/>
</dbReference>
<dbReference type="InterPro" id="IPR011601">
    <property type="entry name" value="MurB_C"/>
</dbReference>
<dbReference type="InterPro" id="IPR036635">
    <property type="entry name" value="MurB_C_sf"/>
</dbReference>
<dbReference type="InterPro" id="IPR006094">
    <property type="entry name" value="Oxid_FAD_bind_N"/>
</dbReference>
<dbReference type="NCBIfam" id="TIGR00179">
    <property type="entry name" value="murB"/>
    <property type="match status" value="1"/>
</dbReference>
<dbReference type="NCBIfam" id="NF010480">
    <property type="entry name" value="PRK13905.1"/>
    <property type="match status" value="1"/>
</dbReference>
<dbReference type="PANTHER" id="PTHR21071">
    <property type="entry name" value="UDP-N-ACETYLENOLPYRUVOYLGLUCOSAMINE REDUCTASE"/>
    <property type="match status" value="1"/>
</dbReference>
<dbReference type="PANTHER" id="PTHR21071:SF4">
    <property type="entry name" value="UDP-N-ACETYLENOLPYRUVOYLGLUCOSAMINE REDUCTASE"/>
    <property type="match status" value="1"/>
</dbReference>
<dbReference type="Pfam" id="PF01565">
    <property type="entry name" value="FAD_binding_4"/>
    <property type="match status" value="1"/>
</dbReference>
<dbReference type="Pfam" id="PF02873">
    <property type="entry name" value="MurB_C"/>
    <property type="match status" value="1"/>
</dbReference>
<dbReference type="SUPFAM" id="SSF56176">
    <property type="entry name" value="FAD-binding/transporter-associated domain-like"/>
    <property type="match status" value="1"/>
</dbReference>
<dbReference type="SUPFAM" id="SSF56194">
    <property type="entry name" value="Uridine diphospho-N-Acetylenolpyruvylglucosamine reductase, MurB, C-terminal domain"/>
    <property type="match status" value="1"/>
</dbReference>
<dbReference type="PROSITE" id="PS51387">
    <property type="entry name" value="FAD_PCMH"/>
    <property type="match status" value="1"/>
</dbReference>
<evidence type="ECO:0000255" key="1">
    <source>
        <dbReference type="HAMAP-Rule" id="MF_00037"/>
    </source>
</evidence>
<comment type="function">
    <text evidence="1">Cell wall formation.</text>
</comment>
<comment type="catalytic activity">
    <reaction evidence="1">
        <text>UDP-N-acetyl-alpha-D-muramate + NADP(+) = UDP-N-acetyl-3-O-(1-carboxyvinyl)-alpha-D-glucosamine + NADPH + H(+)</text>
        <dbReference type="Rhea" id="RHEA:12248"/>
        <dbReference type="ChEBI" id="CHEBI:15378"/>
        <dbReference type="ChEBI" id="CHEBI:57783"/>
        <dbReference type="ChEBI" id="CHEBI:58349"/>
        <dbReference type="ChEBI" id="CHEBI:68483"/>
        <dbReference type="ChEBI" id="CHEBI:70757"/>
        <dbReference type="EC" id="1.3.1.98"/>
    </reaction>
</comment>
<comment type="cofactor">
    <cofactor evidence="1">
        <name>FAD</name>
        <dbReference type="ChEBI" id="CHEBI:57692"/>
    </cofactor>
</comment>
<comment type="pathway">
    <text evidence="1">Cell wall biogenesis; peptidoglycan biosynthesis.</text>
</comment>
<comment type="subcellular location">
    <subcellularLocation>
        <location evidence="1">Cytoplasm</location>
    </subcellularLocation>
</comment>
<comment type="similarity">
    <text evidence="1">Belongs to the MurB family.</text>
</comment>
<protein>
    <recommendedName>
        <fullName evidence="1">UDP-N-acetylenolpyruvoylglucosamine reductase</fullName>
        <ecNumber evidence="1">1.3.1.98</ecNumber>
    </recommendedName>
    <alternativeName>
        <fullName evidence="1">UDP-N-acetylmuramate dehydrogenase</fullName>
    </alternativeName>
</protein>
<gene>
    <name evidence="1" type="primary">murB</name>
    <name type="ordered locus">Syncc9605_0028</name>
</gene>
<organism>
    <name type="scientific">Synechococcus sp. (strain CC9605)</name>
    <dbReference type="NCBI Taxonomy" id="110662"/>
    <lineage>
        <taxon>Bacteria</taxon>
        <taxon>Bacillati</taxon>
        <taxon>Cyanobacteriota</taxon>
        <taxon>Cyanophyceae</taxon>
        <taxon>Synechococcales</taxon>
        <taxon>Synechococcaceae</taxon>
        <taxon>Synechococcus</taxon>
    </lineage>
</organism>
<keyword id="KW-0131">Cell cycle</keyword>
<keyword id="KW-0132">Cell division</keyword>
<keyword id="KW-0133">Cell shape</keyword>
<keyword id="KW-0961">Cell wall biogenesis/degradation</keyword>
<keyword id="KW-0963">Cytoplasm</keyword>
<keyword id="KW-0274">FAD</keyword>
<keyword id="KW-0285">Flavoprotein</keyword>
<keyword id="KW-0521">NADP</keyword>
<keyword id="KW-0560">Oxidoreductase</keyword>
<keyword id="KW-0573">Peptidoglycan synthesis</keyword>